<proteinExistence type="inferred from homology"/>
<name>RNC_PECCP</name>
<organism>
    <name type="scientific">Pectobacterium carotovorum subsp. carotovorum (strain PC1)</name>
    <dbReference type="NCBI Taxonomy" id="561230"/>
    <lineage>
        <taxon>Bacteria</taxon>
        <taxon>Pseudomonadati</taxon>
        <taxon>Pseudomonadota</taxon>
        <taxon>Gammaproteobacteria</taxon>
        <taxon>Enterobacterales</taxon>
        <taxon>Pectobacteriaceae</taxon>
        <taxon>Pectobacterium</taxon>
    </lineage>
</organism>
<feature type="chain" id="PRO_1000202840" description="Ribonuclease 3">
    <location>
        <begin position="1"/>
        <end position="226"/>
    </location>
</feature>
<feature type="domain" description="RNase III" evidence="1">
    <location>
        <begin position="6"/>
        <end position="128"/>
    </location>
</feature>
<feature type="domain" description="DRBM" evidence="1">
    <location>
        <begin position="155"/>
        <end position="225"/>
    </location>
</feature>
<feature type="active site" evidence="1">
    <location>
        <position position="45"/>
    </location>
</feature>
<feature type="active site" evidence="1">
    <location>
        <position position="117"/>
    </location>
</feature>
<feature type="binding site" evidence="1">
    <location>
        <position position="41"/>
    </location>
    <ligand>
        <name>Mg(2+)</name>
        <dbReference type="ChEBI" id="CHEBI:18420"/>
    </ligand>
</feature>
<feature type="binding site" evidence="1">
    <location>
        <position position="114"/>
    </location>
    <ligand>
        <name>Mg(2+)</name>
        <dbReference type="ChEBI" id="CHEBI:18420"/>
    </ligand>
</feature>
<feature type="binding site" evidence="1">
    <location>
        <position position="117"/>
    </location>
    <ligand>
        <name>Mg(2+)</name>
        <dbReference type="ChEBI" id="CHEBI:18420"/>
    </ligand>
</feature>
<dbReference type="EC" id="3.1.26.3" evidence="1"/>
<dbReference type="EMBL" id="CP001657">
    <property type="protein sequence ID" value="ACT14094.1"/>
    <property type="molecule type" value="Genomic_DNA"/>
</dbReference>
<dbReference type="RefSeq" id="WP_010280465.1">
    <property type="nucleotide sequence ID" value="NC_012917.1"/>
</dbReference>
<dbReference type="SMR" id="C6DC00"/>
<dbReference type="STRING" id="561230.PC1_3071"/>
<dbReference type="GeneID" id="93391251"/>
<dbReference type="KEGG" id="pct:PC1_3071"/>
<dbReference type="eggNOG" id="COG0571">
    <property type="taxonomic scope" value="Bacteria"/>
</dbReference>
<dbReference type="HOGENOM" id="CLU_000907_1_1_6"/>
<dbReference type="OrthoDB" id="9805026at2"/>
<dbReference type="Proteomes" id="UP000002736">
    <property type="component" value="Chromosome"/>
</dbReference>
<dbReference type="GO" id="GO:0005737">
    <property type="term" value="C:cytoplasm"/>
    <property type="evidence" value="ECO:0007669"/>
    <property type="project" value="UniProtKB-SubCell"/>
</dbReference>
<dbReference type="GO" id="GO:0003725">
    <property type="term" value="F:double-stranded RNA binding"/>
    <property type="evidence" value="ECO:0007669"/>
    <property type="project" value="TreeGrafter"/>
</dbReference>
<dbReference type="GO" id="GO:0046872">
    <property type="term" value="F:metal ion binding"/>
    <property type="evidence" value="ECO:0007669"/>
    <property type="project" value="UniProtKB-KW"/>
</dbReference>
<dbReference type="GO" id="GO:0004525">
    <property type="term" value="F:ribonuclease III activity"/>
    <property type="evidence" value="ECO:0007669"/>
    <property type="project" value="UniProtKB-UniRule"/>
</dbReference>
<dbReference type="GO" id="GO:0019843">
    <property type="term" value="F:rRNA binding"/>
    <property type="evidence" value="ECO:0007669"/>
    <property type="project" value="UniProtKB-KW"/>
</dbReference>
<dbReference type="GO" id="GO:0006397">
    <property type="term" value="P:mRNA processing"/>
    <property type="evidence" value="ECO:0007669"/>
    <property type="project" value="UniProtKB-UniRule"/>
</dbReference>
<dbReference type="GO" id="GO:0010468">
    <property type="term" value="P:regulation of gene expression"/>
    <property type="evidence" value="ECO:0007669"/>
    <property type="project" value="TreeGrafter"/>
</dbReference>
<dbReference type="GO" id="GO:0006364">
    <property type="term" value="P:rRNA processing"/>
    <property type="evidence" value="ECO:0007669"/>
    <property type="project" value="UniProtKB-UniRule"/>
</dbReference>
<dbReference type="GO" id="GO:0008033">
    <property type="term" value="P:tRNA processing"/>
    <property type="evidence" value="ECO:0007669"/>
    <property type="project" value="UniProtKB-KW"/>
</dbReference>
<dbReference type="CDD" id="cd10845">
    <property type="entry name" value="DSRM_RNAse_III_family"/>
    <property type="match status" value="1"/>
</dbReference>
<dbReference type="CDD" id="cd00593">
    <property type="entry name" value="RIBOc"/>
    <property type="match status" value="1"/>
</dbReference>
<dbReference type="FunFam" id="1.10.1520.10:FF:000001">
    <property type="entry name" value="Ribonuclease 3"/>
    <property type="match status" value="1"/>
</dbReference>
<dbReference type="FunFam" id="3.30.160.20:FF:000003">
    <property type="entry name" value="Ribonuclease 3"/>
    <property type="match status" value="1"/>
</dbReference>
<dbReference type="Gene3D" id="3.30.160.20">
    <property type="match status" value="1"/>
</dbReference>
<dbReference type="Gene3D" id="1.10.1520.10">
    <property type="entry name" value="Ribonuclease III domain"/>
    <property type="match status" value="1"/>
</dbReference>
<dbReference type="HAMAP" id="MF_00104">
    <property type="entry name" value="RNase_III"/>
    <property type="match status" value="1"/>
</dbReference>
<dbReference type="InterPro" id="IPR014720">
    <property type="entry name" value="dsRBD_dom"/>
</dbReference>
<dbReference type="InterPro" id="IPR011907">
    <property type="entry name" value="RNase_III"/>
</dbReference>
<dbReference type="InterPro" id="IPR000999">
    <property type="entry name" value="RNase_III_dom"/>
</dbReference>
<dbReference type="InterPro" id="IPR036389">
    <property type="entry name" value="RNase_III_sf"/>
</dbReference>
<dbReference type="NCBIfam" id="TIGR02191">
    <property type="entry name" value="RNaseIII"/>
    <property type="match status" value="1"/>
</dbReference>
<dbReference type="PANTHER" id="PTHR11207:SF0">
    <property type="entry name" value="RIBONUCLEASE 3"/>
    <property type="match status" value="1"/>
</dbReference>
<dbReference type="PANTHER" id="PTHR11207">
    <property type="entry name" value="RIBONUCLEASE III"/>
    <property type="match status" value="1"/>
</dbReference>
<dbReference type="Pfam" id="PF00035">
    <property type="entry name" value="dsrm"/>
    <property type="match status" value="1"/>
</dbReference>
<dbReference type="Pfam" id="PF14622">
    <property type="entry name" value="Ribonucleas_3_3"/>
    <property type="match status" value="1"/>
</dbReference>
<dbReference type="SMART" id="SM00358">
    <property type="entry name" value="DSRM"/>
    <property type="match status" value="1"/>
</dbReference>
<dbReference type="SMART" id="SM00535">
    <property type="entry name" value="RIBOc"/>
    <property type="match status" value="1"/>
</dbReference>
<dbReference type="SUPFAM" id="SSF54768">
    <property type="entry name" value="dsRNA-binding domain-like"/>
    <property type="match status" value="1"/>
</dbReference>
<dbReference type="SUPFAM" id="SSF69065">
    <property type="entry name" value="RNase III domain-like"/>
    <property type="match status" value="1"/>
</dbReference>
<dbReference type="PROSITE" id="PS50137">
    <property type="entry name" value="DS_RBD"/>
    <property type="match status" value="1"/>
</dbReference>
<dbReference type="PROSITE" id="PS00517">
    <property type="entry name" value="RNASE_3_1"/>
    <property type="match status" value="1"/>
</dbReference>
<dbReference type="PROSITE" id="PS50142">
    <property type="entry name" value="RNASE_3_2"/>
    <property type="match status" value="1"/>
</dbReference>
<accession>C6DC00</accession>
<comment type="function">
    <text evidence="1">Digests double-stranded RNA. Involved in the processing of primary rRNA transcript to yield the immediate precursors to the large and small rRNAs (23S and 16S). Processes some mRNAs, and tRNAs when they are encoded in the rRNA operon. Processes pre-crRNA and tracrRNA of type II CRISPR loci if present in the organism.</text>
</comment>
<comment type="catalytic activity">
    <reaction evidence="1">
        <text>Endonucleolytic cleavage to 5'-phosphomonoester.</text>
        <dbReference type="EC" id="3.1.26.3"/>
    </reaction>
</comment>
<comment type="cofactor">
    <cofactor evidence="1">
        <name>Mg(2+)</name>
        <dbReference type="ChEBI" id="CHEBI:18420"/>
    </cofactor>
</comment>
<comment type="subunit">
    <text evidence="1">Homodimer.</text>
</comment>
<comment type="subcellular location">
    <subcellularLocation>
        <location evidence="1">Cytoplasm</location>
    </subcellularLocation>
</comment>
<comment type="similarity">
    <text evidence="1">Belongs to the ribonuclease III family.</text>
</comment>
<reference key="1">
    <citation type="submission" date="2009-07" db="EMBL/GenBank/DDBJ databases">
        <title>Complete sequence of Pectobacterium carotovorum subsp. carotovorum PC1.</title>
        <authorList>
            <consortium name="US DOE Joint Genome Institute"/>
            <person name="Lucas S."/>
            <person name="Copeland A."/>
            <person name="Lapidus A."/>
            <person name="Glavina del Rio T."/>
            <person name="Tice H."/>
            <person name="Bruce D."/>
            <person name="Goodwin L."/>
            <person name="Pitluck S."/>
            <person name="Munk A.C."/>
            <person name="Brettin T."/>
            <person name="Detter J.C."/>
            <person name="Han C."/>
            <person name="Tapia R."/>
            <person name="Larimer F."/>
            <person name="Land M."/>
            <person name="Hauser L."/>
            <person name="Kyrpides N."/>
            <person name="Mikhailova N."/>
            <person name="Balakrishnan V."/>
            <person name="Glasner J."/>
            <person name="Perna N.T."/>
        </authorList>
    </citation>
    <scope>NUCLEOTIDE SEQUENCE [LARGE SCALE GENOMIC DNA]</scope>
    <source>
        <strain>PC1</strain>
    </source>
</reference>
<protein>
    <recommendedName>
        <fullName evidence="1">Ribonuclease 3</fullName>
        <ecNumber evidence="1">3.1.26.3</ecNumber>
    </recommendedName>
    <alternativeName>
        <fullName evidence="1">Ribonuclease III</fullName>
        <shortName evidence="1">RNase III</shortName>
    </alternativeName>
</protein>
<keyword id="KW-0963">Cytoplasm</keyword>
<keyword id="KW-0255">Endonuclease</keyword>
<keyword id="KW-0378">Hydrolase</keyword>
<keyword id="KW-0460">Magnesium</keyword>
<keyword id="KW-0479">Metal-binding</keyword>
<keyword id="KW-0507">mRNA processing</keyword>
<keyword id="KW-0540">Nuclease</keyword>
<keyword id="KW-0694">RNA-binding</keyword>
<keyword id="KW-0698">rRNA processing</keyword>
<keyword id="KW-0699">rRNA-binding</keyword>
<keyword id="KW-0819">tRNA processing</keyword>
<sequence>MNPILINRLQRKLGYTFQQYELLLQALTHRSASSKHNERLEFLGDSILSFVIANALYHRFPKVDEGDMSRMRATLVRGNTLAEIAREFELGECLRLGPGELKSGGFRRESILADTVEALIGGIFLDSDIQTIERLILNWYQTRLDEISPGDKQKDPKTRLQEFLQGRHLPLPTYLVVQVRGEAHDQEFTIHCQVSGFSESVIGTGSSRRKAEQAAAEQALKKLELE</sequence>
<evidence type="ECO:0000255" key="1">
    <source>
        <dbReference type="HAMAP-Rule" id="MF_00104"/>
    </source>
</evidence>
<gene>
    <name evidence="1" type="primary">rnc</name>
    <name type="ordered locus">PC1_3071</name>
</gene>